<name>DCUP_SHESM</name>
<accession>Q0HN48</accession>
<proteinExistence type="inferred from homology"/>
<keyword id="KW-0963">Cytoplasm</keyword>
<keyword id="KW-0210">Decarboxylase</keyword>
<keyword id="KW-0456">Lyase</keyword>
<keyword id="KW-0627">Porphyrin biosynthesis</keyword>
<reference key="1">
    <citation type="submission" date="2006-08" db="EMBL/GenBank/DDBJ databases">
        <title>Complete sequence of Shewanella sp. MR-4.</title>
        <authorList>
            <consortium name="US DOE Joint Genome Institute"/>
            <person name="Copeland A."/>
            <person name="Lucas S."/>
            <person name="Lapidus A."/>
            <person name="Barry K."/>
            <person name="Detter J.C."/>
            <person name="Glavina del Rio T."/>
            <person name="Hammon N."/>
            <person name="Israni S."/>
            <person name="Dalin E."/>
            <person name="Tice H."/>
            <person name="Pitluck S."/>
            <person name="Kiss H."/>
            <person name="Brettin T."/>
            <person name="Bruce D."/>
            <person name="Han C."/>
            <person name="Tapia R."/>
            <person name="Gilna P."/>
            <person name="Schmutz J."/>
            <person name="Larimer F."/>
            <person name="Land M."/>
            <person name="Hauser L."/>
            <person name="Kyrpides N."/>
            <person name="Mikhailova N."/>
            <person name="Nealson K."/>
            <person name="Konstantinidis K."/>
            <person name="Klappenbach J."/>
            <person name="Tiedje J."/>
            <person name="Richardson P."/>
        </authorList>
    </citation>
    <scope>NUCLEOTIDE SEQUENCE [LARGE SCALE GENOMIC DNA]</scope>
    <source>
        <strain>MR-4</strain>
    </source>
</reference>
<protein>
    <recommendedName>
        <fullName evidence="1">Uroporphyrinogen decarboxylase</fullName>
        <shortName evidence="1">UPD</shortName>
        <shortName evidence="1">URO-D</shortName>
        <ecNumber evidence="1">4.1.1.37</ecNumber>
    </recommendedName>
</protein>
<organism>
    <name type="scientific">Shewanella sp. (strain MR-4)</name>
    <dbReference type="NCBI Taxonomy" id="60480"/>
    <lineage>
        <taxon>Bacteria</taxon>
        <taxon>Pseudomonadati</taxon>
        <taxon>Pseudomonadota</taxon>
        <taxon>Gammaproteobacteria</taxon>
        <taxon>Alteromonadales</taxon>
        <taxon>Shewanellaceae</taxon>
        <taxon>Shewanella</taxon>
    </lineage>
</organism>
<evidence type="ECO:0000255" key="1">
    <source>
        <dbReference type="HAMAP-Rule" id="MF_00218"/>
    </source>
</evidence>
<sequence length="354" mass="39206">MAELKNDRYLRALLKQPVDMTPVWMMRQAGRYLPEYKATRAQAGDFMSLCKNHELACEVTLQPLRRYELDAAILFSDILTVPDAMGLGLYFEAGEGPRFERPTDTIDAIKKLAVPDPEDDLGYVMKAVSTIRRELNGQVPLIGFSGSPWTLATYMVEGGSSKTFEKIKKMAYAEPAALHMLLDKLADSVTLYLNAQVANGAQSLMIFDSWGGALSHTAYREFSLRYMQKIVDGLTRFADGRQVPVTLFTKGGGLWLEAMAETGCDALGLDWTVDIADARRRVGHKVALQGNMDPSMLYAPIPRIEEEVAQILAGYGEGTGHVFNLGHGIHQHVDPEHAGAFIKAVHAQSKQYHK</sequence>
<dbReference type="EC" id="4.1.1.37" evidence="1"/>
<dbReference type="EMBL" id="CP000446">
    <property type="protein sequence ID" value="ABI37519.1"/>
    <property type="molecule type" value="Genomic_DNA"/>
</dbReference>
<dbReference type="RefSeq" id="WP_011621241.1">
    <property type="nucleotide sequence ID" value="NC_008321.1"/>
</dbReference>
<dbReference type="SMR" id="Q0HN48"/>
<dbReference type="GeneID" id="94726431"/>
<dbReference type="KEGG" id="she:Shewmr4_0439"/>
<dbReference type="HOGENOM" id="CLU_040933_0_0_6"/>
<dbReference type="UniPathway" id="UPA00251">
    <property type="reaction ID" value="UER00321"/>
</dbReference>
<dbReference type="GO" id="GO:0005829">
    <property type="term" value="C:cytosol"/>
    <property type="evidence" value="ECO:0007669"/>
    <property type="project" value="TreeGrafter"/>
</dbReference>
<dbReference type="GO" id="GO:0004853">
    <property type="term" value="F:uroporphyrinogen decarboxylase activity"/>
    <property type="evidence" value="ECO:0007669"/>
    <property type="project" value="UniProtKB-UniRule"/>
</dbReference>
<dbReference type="GO" id="GO:0019353">
    <property type="term" value="P:protoporphyrinogen IX biosynthetic process from glutamate"/>
    <property type="evidence" value="ECO:0007669"/>
    <property type="project" value="TreeGrafter"/>
</dbReference>
<dbReference type="CDD" id="cd00717">
    <property type="entry name" value="URO-D"/>
    <property type="match status" value="1"/>
</dbReference>
<dbReference type="FunFam" id="3.20.20.210:FF:000001">
    <property type="entry name" value="Uroporphyrinogen decarboxylase"/>
    <property type="match status" value="1"/>
</dbReference>
<dbReference type="Gene3D" id="3.20.20.210">
    <property type="match status" value="1"/>
</dbReference>
<dbReference type="HAMAP" id="MF_00218">
    <property type="entry name" value="URO_D"/>
    <property type="match status" value="1"/>
</dbReference>
<dbReference type="InterPro" id="IPR038071">
    <property type="entry name" value="UROD/MetE-like_sf"/>
</dbReference>
<dbReference type="InterPro" id="IPR006361">
    <property type="entry name" value="Uroporphyrinogen_deCO2ase_HemE"/>
</dbReference>
<dbReference type="InterPro" id="IPR000257">
    <property type="entry name" value="Uroporphyrinogen_deCOase"/>
</dbReference>
<dbReference type="NCBIfam" id="TIGR01464">
    <property type="entry name" value="hemE"/>
    <property type="match status" value="1"/>
</dbReference>
<dbReference type="PANTHER" id="PTHR21091">
    <property type="entry name" value="METHYLTETRAHYDROFOLATE:HOMOCYSTEINE METHYLTRANSFERASE RELATED"/>
    <property type="match status" value="1"/>
</dbReference>
<dbReference type="PANTHER" id="PTHR21091:SF169">
    <property type="entry name" value="UROPORPHYRINOGEN DECARBOXYLASE"/>
    <property type="match status" value="1"/>
</dbReference>
<dbReference type="Pfam" id="PF01208">
    <property type="entry name" value="URO-D"/>
    <property type="match status" value="1"/>
</dbReference>
<dbReference type="SUPFAM" id="SSF51726">
    <property type="entry name" value="UROD/MetE-like"/>
    <property type="match status" value="1"/>
</dbReference>
<dbReference type="PROSITE" id="PS00906">
    <property type="entry name" value="UROD_1"/>
    <property type="match status" value="1"/>
</dbReference>
<dbReference type="PROSITE" id="PS00907">
    <property type="entry name" value="UROD_2"/>
    <property type="match status" value="1"/>
</dbReference>
<gene>
    <name evidence="1" type="primary">hemE</name>
    <name type="ordered locus">Shewmr4_0439</name>
</gene>
<comment type="function">
    <text evidence="1">Catalyzes the decarboxylation of four acetate groups of uroporphyrinogen-III to yield coproporphyrinogen-III.</text>
</comment>
<comment type="catalytic activity">
    <reaction evidence="1">
        <text>uroporphyrinogen III + 4 H(+) = coproporphyrinogen III + 4 CO2</text>
        <dbReference type="Rhea" id="RHEA:19865"/>
        <dbReference type="ChEBI" id="CHEBI:15378"/>
        <dbReference type="ChEBI" id="CHEBI:16526"/>
        <dbReference type="ChEBI" id="CHEBI:57308"/>
        <dbReference type="ChEBI" id="CHEBI:57309"/>
        <dbReference type="EC" id="4.1.1.37"/>
    </reaction>
</comment>
<comment type="pathway">
    <text evidence="1">Porphyrin-containing compound metabolism; protoporphyrin-IX biosynthesis; coproporphyrinogen-III from 5-aminolevulinate: step 4/4.</text>
</comment>
<comment type="subunit">
    <text evidence="1">Homodimer.</text>
</comment>
<comment type="subcellular location">
    <subcellularLocation>
        <location evidence="1">Cytoplasm</location>
    </subcellularLocation>
</comment>
<comment type="similarity">
    <text evidence="1">Belongs to the uroporphyrinogen decarboxylase family.</text>
</comment>
<feature type="chain" id="PRO_1000023974" description="Uroporphyrinogen decarboxylase">
    <location>
        <begin position="1"/>
        <end position="354"/>
    </location>
</feature>
<feature type="binding site" evidence="1">
    <location>
        <begin position="27"/>
        <end position="31"/>
    </location>
    <ligand>
        <name>substrate</name>
    </ligand>
</feature>
<feature type="binding site" evidence="1">
    <location>
        <position position="77"/>
    </location>
    <ligand>
        <name>substrate</name>
    </ligand>
</feature>
<feature type="binding site" evidence="1">
    <location>
        <position position="154"/>
    </location>
    <ligand>
        <name>substrate</name>
    </ligand>
</feature>
<feature type="binding site" evidence="1">
    <location>
        <position position="209"/>
    </location>
    <ligand>
        <name>substrate</name>
    </ligand>
</feature>
<feature type="binding site" evidence="1">
    <location>
        <position position="327"/>
    </location>
    <ligand>
        <name>substrate</name>
    </ligand>
</feature>
<feature type="site" description="Transition state stabilizer" evidence="1">
    <location>
        <position position="77"/>
    </location>
</feature>